<accession>B1Y0H5</accession>
<evidence type="ECO:0000255" key="1">
    <source>
        <dbReference type="HAMAP-Rule" id="MF_00385"/>
    </source>
</evidence>
<evidence type="ECO:0000305" key="2"/>
<protein>
    <recommendedName>
        <fullName evidence="1">Small ribosomal subunit protein bS16</fullName>
    </recommendedName>
    <alternativeName>
        <fullName evidence="2">30S ribosomal protein S16</fullName>
    </alternativeName>
</protein>
<gene>
    <name evidence="1" type="primary">rpsP</name>
    <name type="ordered locus">Lcho_0681</name>
</gene>
<organism>
    <name type="scientific">Leptothrix cholodnii (strain ATCC 51168 / LMG 8142 / SP-6)</name>
    <name type="common">Leptothrix discophora (strain SP-6)</name>
    <dbReference type="NCBI Taxonomy" id="395495"/>
    <lineage>
        <taxon>Bacteria</taxon>
        <taxon>Pseudomonadati</taxon>
        <taxon>Pseudomonadota</taxon>
        <taxon>Betaproteobacteria</taxon>
        <taxon>Burkholderiales</taxon>
        <taxon>Sphaerotilaceae</taxon>
        <taxon>Leptothrix</taxon>
    </lineage>
</organism>
<feature type="chain" id="PRO_1000196426" description="Small ribosomal subunit protein bS16">
    <location>
        <begin position="1"/>
        <end position="86"/>
    </location>
</feature>
<sequence>MVVIRLSRGGSKRRPFYNIVAANSANRRDGRFLERVGFYNPVASGGEEALRIAFDRVEHWVSHGAQLSPTAARLVKQAQAKVAPAA</sequence>
<comment type="similarity">
    <text evidence="1">Belongs to the bacterial ribosomal protein bS16 family.</text>
</comment>
<reference key="1">
    <citation type="submission" date="2008-03" db="EMBL/GenBank/DDBJ databases">
        <title>Complete sequence of Leptothrix cholodnii SP-6.</title>
        <authorList>
            <consortium name="US DOE Joint Genome Institute"/>
            <person name="Copeland A."/>
            <person name="Lucas S."/>
            <person name="Lapidus A."/>
            <person name="Glavina del Rio T."/>
            <person name="Dalin E."/>
            <person name="Tice H."/>
            <person name="Bruce D."/>
            <person name="Goodwin L."/>
            <person name="Pitluck S."/>
            <person name="Chertkov O."/>
            <person name="Brettin T."/>
            <person name="Detter J.C."/>
            <person name="Han C."/>
            <person name="Kuske C.R."/>
            <person name="Schmutz J."/>
            <person name="Larimer F."/>
            <person name="Land M."/>
            <person name="Hauser L."/>
            <person name="Kyrpides N."/>
            <person name="Lykidis A."/>
            <person name="Emerson D."/>
            <person name="Richardson P."/>
        </authorList>
    </citation>
    <scope>NUCLEOTIDE SEQUENCE [LARGE SCALE GENOMIC DNA]</scope>
    <source>
        <strain>ATCC 51168 / LMG 8142 / SP-6</strain>
    </source>
</reference>
<keyword id="KW-1185">Reference proteome</keyword>
<keyword id="KW-0687">Ribonucleoprotein</keyword>
<keyword id="KW-0689">Ribosomal protein</keyword>
<proteinExistence type="inferred from homology"/>
<dbReference type="EMBL" id="CP001013">
    <property type="protein sequence ID" value="ACB32956.1"/>
    <property type="molecule type" value="Genomic_DNA"/>
</dbReference>
<dbReference type="RefSeq" id="WP_012345718.1">
    <property type="nucleotide sequence ID" value="NC_010524.1"/>
</dbReference>
<dbReference type="SMR" id="B1Y0H5"/>
<dbReference type="STRING" id="395495.Lcho_0681"/>
<dbReference type="KEGG" id="lch:Lcho_0681"/>
<dbReference type="eggNOG" id="COG0228">
    <property type="taxonomic scope" value="Bacteria"/>
</dbReference>
<dbReference type="HOGENOM" id="CLU_100590_5_1_4"/>
<dbReference type="OrthoDB" id="9807878at2"/>
<dbReference type="Proteomes" id="UP000001693">
    <property type="component" value="Chromosome"/>
</dbReference>
<dbReference type="GO" id="GO:0005737">
    <property type="term" value="C:cytoplasm"/>
    <property type="evidence" value="ECO:0007669"/>
    <property type="project" value="UniProtKB-ARBA"/>
</dbReference>
<dbReference type="GO" id="GO:0015935">
    <property type="term" value="C:small ribosomal subunit"/>
    <property type="evidence" value="ECO:0007669"/>
    <property type="project" value="TreeGrafter"/>
</dbReference>
<dbReference type="GO" id="GO:0003735">
    <property type="term" value="F:structural constituent of ribosome"/>
    <property type="evidence" value="ECO:0007669"/>
    <property type="project" value="InterPro"/>
</dbReference>
<dbReference type="GO" id="GO:0006412">
    <property type="term" value="P:translation"/>
    <property type="evidence" value="ECO:0007669"/>
    <property type="project" value="UniProtKB-UniRule"/>
</dbReference>
<dbReference type="Gene3D" id="3.30.1320.10">
    <property type="match status" value="1"/>
</dbReference>
<dbReference type="HAMAP" id="MF_00385">
    <property type="entry name" value="Ribosomal_bS16"/>
    <property type="match status" value="1"/>
</dbReference>
<dbReference type="InterPro" id="IPR000307">
    <property type="entry name" value="Ribosomal_bS16"/>
</dbReference>
<dbReference type="InterPro" id="IPR023803">
    <property type="entry name" value="Ribosomal_bS16_dom_sf"/>
</dbReference>
<dbReference type="NCBIfam" id="TIGR00002">
    <property type="entry name" value="S16"/>
    <property type="match status" value="1"/>
</dbReference>
<dbReference type="PANTHER" id="PTHR12919">
    <property type="entry name" value="30S RIBOSOMAL PROTEIN S16"/>
    <property type="match status" value="1"/>
</dbReference>
<dbReference type="PANTHER" id="PTHR12919:SF20">
    <property type="entry name" value="SMALL RIBOSOMAL SUBUNIT PROTEIN BS16M"/>
    <property type="match status" value="1"/>
</dbReference>
<dbReference type="Pfam" id="PF00886">
    <property type="entry name" value="Ribosomal_S16"/>
    <property type="match status" value="1"/>
</dbReference>
<dbReference type="SUPFAM" id="SSF54565">
    <property type="entry name" value="Ribosomal protein S16"/>
    <property type="match status" value="1"/>
</dbReference>
<name>RS16_LEPCP</name>